<accession>Q5HUG9</accession>
<organism>
    <name type="scientific">Campylobacter jejuni (strain RM1221)</name>
    <dbReference type="NCBI Taxonomy" id="195099"/>
    <lineage>
        <taxon>Bacteria</taxon>
        <taxon>Pseudomonadati</taxon>
        <taxon>Campylobacterota</taxon>
        <taxon>Epsilonproteobacteria</taxon>
        <taxon>Campylobacterales</taxon>
        <taxon>Campylobacteraceae</taxon>
        <taxon>Campylobacter</taxon>
    </lineage>
</organism>
<name>Y1073_CAMJR</name>
<reference key="1">
    <citation type="journal article" date="2005" name="PLoS Biol.">
        <title>Major structural differences and novel potential virulence mechanisms from the genomes of multiple Campylobacter species.</title>
        <authorList>
            <person name="Fouts D.E."/>
            <person name="Mongodin E.F."/>
            <person name="Mandrell R.E."/>
            <person name="Miller W.G."/>
            <person name="Rasko D.A."/>
            <person name="Ravel J."/>
            <person name="Brinkac L.M."/>
            <person name="DeBoy R.T."/>
            <person name="Parker C.T."/>
            <person name="Daugherty S.C."/>
            <person name="Dodson R.J."/>
            <person name="Durkin A.S."/>
            <person name="Madupu R."/>
            <person name="Sullivan S.A."/>
            <person name="Shetty J.U."/>
            <person name="Ayodeji M.A."/>
            <person name="Shvartsbeyn A."/>
            <person name="Schatz M.C."/>
            <person name="Badger J.H."/>
            <person name="Fraser C.M."/>
            <person name="Nelson K.E."/>
        </authorList>
    </citation>
    <scope>NUCLEOTIDE SEQUENCE [LARGE SCALE GENOMIC DNA]</scope>
    <source>
        <strain>RM1221</strain>
    </source>
</reference>
<gene>
    <name type="ordered locus">CJE1073</name>
</gene>
<proteinExistence type="inferred from homology"/>
<comment type="similarity">
    <text evidence="1">Belongs to the UPF0763 family.</text>
</comment>
<protein>
    <recommendedName>
        <fullName evidence="1">UPF0763 protein CJE1073</fullName>
    </recommendedName>
</protein>
<dbReference type="EMBL" id="CP000025">
    <property type="protein sequence ID" value="AAW35401.1"/>
    <property type="molecule type" value="Genomic_DNA"/>
</dbReference>
<dbReference type="RefSeq" id="WP_002856534.1">
    <property type="nucleotide sequence ID" value="NC_003912.7"/>
</dbReference>
<dbReference type="SMR" id="Q5HUG9"/>
<dbReference type="KEGG" id="cjr:CJE1073"/>
<dbReference type="HOGENOM" id="CLU_120359_1_0_7"/>
<dbReference type="HAMAP" id="MF_02110">
    <property type="entry name" value="UPF0763"/>
    <property type="match status" value="1"/>
</dbReference>
<dbReference type="InterPro" id="IPR019724">
    <property type="entry name" value="UPF0763"/>
</dbReference>
<dbReference type="Pfam" id="PF10788">
    <property type="entry name" value="DUF2603"/>
    <property type="match status" value="1"/>
</dbReference>
<feature type="chain" id="PRO_0000394779" description="UPF0763 protein CJE1073">
    <location>
        <begin position="1"/>
        <end position="163"/>
    </location>
</feature>
<sequence>MKELEKYNTCLKRIDEFSQNLGIKKKDRTIFKMKQSENENEKCLVLENGSFDSPEPWFVIDENDEIHTLLSLQSLKNILESLKQSQKENFELRLEKAIYQQIPVDFNDVWTVAMDEIKQKAQNGTMEVSIDLEKLISKIKQEHPNLFVDMQAMIERVNQNERL</sequence>
<evidence type="ECO:0000255" key="1">
    <source>
        <dbReference type="HAMAP-Rule" id="MF_02110"/>
    </source>
</evidence>